<name>SDHD_ECOHS</name>
<evidence type="ECO:0000255" key="1">
    <source>
        <dbReference type="HAMAP-Rule" id="MF_01030"/>
    </source>
</evidence>
<reference key="1">
    <citation type="journal article" date="2008" name="J. Bacteriol.">
        <title>The pangenome structure of Escherichia coli: comparative genomic analysis of E. coli commensal and pathogenic isolates.</title>
        <authorList>
            <person name="Rasko D.A."/>
            <person name="Rosovitz M.J."/>
            <person name="Myers G.S.A."/>
            <person name="Mongodin E.F."/>
            <person name="Fricke W.F."/>
            <person name="Gajer P."/>
            <person name="Crabtree J."/>
            <person name="Sebaihia M."/>
            <person name="Thomson N.R."/>
            <person name="Chaudhuri R."/>
            <person name="Henderson I.R."/>
            <person name="Sperandio V."/>
            <person name="Ravel J."/>
        </authorList>
    </citation>
    <scope>NUCLEOTIDE SEQUENCE [LARGE SCALE GENOMIC DNA]</scope>
    <source>
        <strain>HS</strain>
    </source>
</reference>
<proteinExistence type="inferred from homology"/>
<feature type="chain" id="PRO_1000063712" description="D-serine dehydratase">
    <location>
        <begin position="1"/>
        <end position="442"/>
    </location>
</feature>
<feature type="modified residue" description="N6-(pyridoxal phosphate)lysine" evidence="1">
    <location>
        <position position="118"/>
    </location>
</feature>
<sequence>MENAKMNSLIAQYPLVKDLVALKETTWFNPGTTSLAEGLPYVGLTEQDVQDAHARLSRFAPYLAKAFPETAATGGIIESELVAIPAMQKRLEKEYQQPISGQLLLKKDSHLPISGSIKARGGIYEVLAHAEKLALEAGLLTLDDDYSKLLSPEFKQFFSQYSIAVGSTGNLGLSIGIMSARIGFKVTVHMSADARAWKKAKLRSHGVTVVEYEQDYGVAVEEGRKAAQSDPNCFFIDDENSRTLFLGYSVAGQRLKAQFAQQGRIVDADNPLFVYLPCGVGGGPGGVAFGLKLAFGDHVHCFFAEPTHSPCMLLGVHTGLHDQISVQDIGIDNLTAADGLAVGRASGFVGRAMERLLDGFYTLSDQTMYDMLGWLAQEEGIRLEPSALAGMAGPQRVCASVSYQQMHGFSAEQLRNATHLVWATGGGMVPEEEMNQYLAKGR</sequence>
<accession>A8A2M0</accession>
<keyword id="KW-0456">Lyase</keyword>
<keyword id="KW-0663">Pyridoxal phosphate</keyword>
<dbReference type="EC" id="4.3.1.18" evidence="1"/>
<dbReference type="EMBL" id="CP000802">
    <property type="protein sequence ID" value="ABV06774.1"/>
    <property type="molecule type" value="Genomic_DNA"/>
</dbReference>
<dbReference type="RefSeq" id="WP_000426426.1">
    <property type="nucleotide sequence ID" value="NC_009800.1"/>
</dbReference>
<dbReference type="SMR" id="A8A2M0"/>
<dbReference type="GeneID" id="75202565"/>
<dbReference type="KEGG" id="ecx:EcHS_A2503"/>
<dbReference type="HOGENOM" id="CLU_035707_0_0_6"/>
<dbReference type="GO" id="GO:0008721">
    <property type="term" value="F:D-serine ammonia-lyase activity"/>
    <property type="evidence" value="ECO:0007669"/>
    <property type="project" value="UniProtKB-EC"/>
</dbReference>
<dbReference type="GO" id="GO:0016836">
    <property type="term" value="F:hydro-lyase activity"/>
    <property type="evidence" value="ECO:0007669"/>
    <property type="project" value="UniProtKB-UniRule"/>
</dbReference>
<dbReference type="GO" id="GO:0030170">
    <property type="term" value="F:pyridoxal phosphate binding"/>
    <property type="evidence" value="ECO:0007669"/>
    <property type="project" value="InterPro"/>
</dbReference>
<dbReference type="GO" id="GO:0036088">
    <property type="term" value="P:D-serine catabolic process"/>
    <property type="evidence" value="ECO:0007669"/>
    <property type="project" value="TreeGrafter"/>
</dbReference>
<dbReference type="GO" id="GO:0009097">
    <property type="term" value="P:isoleucine biosynthetic process"/>
    <property type="evidence" value="ECO:0007669"/>
    <property type="project" value="TreeGrafter"/>
</dbReference>
<dbReference type="CDD" id="cd06447">
    <property type="entry name" value="D-Ser-dehyd"/>
    <property type="match status" value="1"/>
</dbReference>
<dbReference type="FunFam" id="3.40.50.1100:FF:000018">
    <property type="entry name" value="D-serine dehydratase"/>
    <property type="match status" value="1"/>
</dbReference>
<dbReference type="Gene3D" id="3.40.50.1100">
    <property type="match status" value="2"/>
</dbReference>
<dbReference type="HAMAP" id="MF_01030">
    <property type="entry name" value="D_Ser_dehydrat"/>
    <property type="match status" value="1"/>
</dbReference>
<dbReference type="InterPro" id="IPR011780">
    <property type="entry name" value="D_Ser_am_lyase"/>
</dbReference>
<dbReference type="InterPro" id="IPR050147">
    <property type="entry name" value="Ser/Thr_Dehydratase"/>
</dbReference>
<dbReference type="InterPro" id="IPR000634">
    <property type="entry name" value="Ser/Thr_deHydtase_PyrdxlP-BS"/>
</dbReference>
<dbReference type="InterPro" id="IPR001926">
    <property type="entry name" value="TrpB-like_PALP"/>
</dbReference>
<dbReference type="InterPro" id="IPR036052">
    <property type="entry name" value="TrpB-like_PALP_sf"/>
</dbReference>
<dbReference type="NCBIfam" id="TIGR02035">
    <property type="entry name" value="D_Ser_am_lyase"/>
    <property type="match status" value="1"/>
</dbReference>
<dbReference type="NCBIfam" id="NF002823">
    <property type="entry name" value="PRK02991.1"/>
    <property type="match status" value="1"/>
</dbReference>
<dbReference type="PANTHER" id="PTHR48078:SF9">
    <property type="entry name" value="D-SERINE DEHYDRATASE"/>
    <property type="match status" value="1"/>
</dbReference>
<dbReference type="PANTHER" id="PTHR48078">
    <property type="entry name" value="THREONINE DEHYDRATASE, MITOCHONDRIAL-RELATED"/>
    <property type="match status" value="1"/>
</dbReference>
<dbReference type="Pfam" id="PF00291">
    <property type="entry name" value="PALP"/>
    <property type="match status" value="1"/>
</dbReference>
<dbReference type="SUPFAM" id="SSF53686">
    <property type="entry name" value="Tryptophan synthase beta subunit-like PLP-dependent enzymes"/>
    <property type="match status" value="1"/>
</dbReference>
<dbReference type="PROSITE" id="PS00165">
    <property type="entry name" value="DEHYDRATASE_SER_THR"/>
    <property type="match status" value="1"/>
</dbReference>
<protein>
    <recommendedName>
        <fullName evidence="1">D-serine dehydratase</fullName>
        <ecNumber evidence="1">4.3.1.18</ecNumber>
    </recommendedName>
    <alternativeName>
        <fullName evidence="1">D-serine deaminase</fullName>
        <shortName evidence="1">DSD</shortName>
    </alternativeName>
</protein>
<organism>
    <name type="scientific">Escherichia coli O9:H4 (strain HS)</name>
    <dbReference type="NCBI Taxonomy" id="331112"/>
    <lineage>
        <taxon>Bacteria</taxon>
        <taxon>Pseudomonadati</taxon>
        <taxon>Pseudomonadota</taxon>
        <taxon>Gammaproteobacteria</taxon>
        <taxon>Enterobacterales</taxon>
        <taxon>Enterobacteriaceae</taxon>
        <taxon>Escherichia</taxon>
    </lineage>
</organism>
<comment type="catalytic activity">
    <reaction evidence="1">
        <text>D-serine = pyruvate + NH4(+)</text>
        <dbReference type="Rhea" id="RHEA:13977"/>
        <dbReference type="ChEBI" id="CHEBI:15361"/>
        <dbReference type="ChEBI" id="CHEBI:28938"/>
        <dbReference type="ChEBI" id="CHEBI:35247"/>
        <dbReference type="EC" id="4.3.1.18"/>
    </reaction>
</comment>
<comment type="cofactor">
    <cofactor evidence="1">
        <name>pyridoxal 5'-phosphate</name>
        <dbReference type="ChEBI" id="CHEBI:597326"/>
    </cofactor>
</comment>
<comment type="subunit">
    <text evidence="1">Monomer.</text>
</comment>
<comment type="similarity">
    <text evidence="1">Belongs to the serine/threonine dehydratase family. DsdA subfamily.</text>
</comment>
<gene>
    <name evidence="1" type="primary">dsdA</name>
    <name type="ordered locus">EcHS_A2503</name>
</gene>